<accession>F4IS91</accession>
<accession>O81059</accession>
<accession>Q0WQ79</accession>
<accession>Q8W4H5</accession>
<sequence length="1340" mass="150913">MHRDMYSSRGTGYGQQQYGSQSGYSQNLGSGYPGSSVSGGAEGGSQISLSSRHPSITGAPQETDIGGGYRSHLSTAASHYGTQYGSVYGSTSLSSSQPLSTNGLGSSVLDNRSGYVPTLPDSPKFASGSYLSPSSHGYGQKTDDLYSDKLSGYIPVDRRQYGEQSSSYLGRELQNEPTRRYADPSNFARQTDLYDRIDQASLLRGEQLLKMQSLHTSSVDAGVNRQTDYLTERSSTVRHSDQEAMHYGGRLESDPHGLSVRNTSSYASQHTPSLLGAVPRRNLDDYIYPESSSNPGYGVSLPPGRDYGTGKGIHSAASLDLDYPGGMLARGTGAAPRVDDLRKGDRASYLREFDLREEERRREDQRARDKEREREREREHDRERERQRERERQRARDRERERILERREKERQGERERERKRALEIKRDRTPTARATSKDTKERTPVPKSISRDARSSSLRRDAHHREASIRRSSPIKPIRRDYVCKVLSSRLVDMERDYVTLDKRYPRLFVPSEFSKVVVNWPKQKLTLSMHTAVSFEHDYIEDGGADVKSTSTKPLALKTGGKSVWNAKMVLMSGLSRTALEDLASDKFFEDRIPHICNILKFAVLKKDHSFMAIGGSWDPTDGMDPSVDQSSLIQTMLRHSKDKLHLDLSNCRHWNPFLEIHYDRVGTDGVFSYKEITVLFVPDLSECLPSFDVWRTQWLAHRKALTERDRLLSQEVKKDTVEVTKDAEKKSPGDTSGTPTTGTKKTVKKIIKRVVKRPVNDGKATGMKGEKSDVPEHVAIPETTVPKEESTGTSSNKKIVKKVAETGDTSDPSAKANEQTPAKTIVKKKIIKRVAKRKVAEIDNKMDGDSKKDGDSDEKKVMEVGKKSSDSGSVEMKPTAESLEDVKDENASKTVDVKQETGSPDTKKKEGASSSSKKDTKTGEDKKAEKKNNSETMSEGKKIDRNNTDEKEVKEKVTEKEIKERGGKDESRIQVKDRKKCEEPPRAGFILQTKRNKDSKLRSLSASLDSLLDYTDKDLDESSFEISLFAESLYEMLQYQMGSRIFEFLKKLRVKIVRQRNQRKRHQEELSVKQNEAKSQDKRQKTAEHEDKEASVISESAPGKDDKETSGKETVDGSREIADKEAVAKTKETLGSKEVTVGEAVNMEVENQDEEDDDGDDDPEEDPEEDPEEDPEEDPEEDPEECEEMDVANTEQEEPAEEPQKKEENLEKTSGTVADPITEAETDNRKEERGPNDSKTEIKPKSETEKHGKQDGGTSDAAKREETVDKELLQAFRFFDRNQAGYVRVEDMRVTIHSLGKFLSHREVKELVQSALLESNTGRDDRILYNKLVRLSL</sequence>
<comment type="function">
    <text evidence="5">Required for salt tolerance and sodium (Na) homeostasis after salt stress. Together with BHLH148/RITF1, regulates the transcription of several genes involved in the detoxification of reactive oxygen species (ROS) generated by salt (NaCl) stress. Binds calcium.</text>
</comment>
<comment type="subunit">
    <text evidence="5">Interacts with BHLH148/RITF1.</text>
</comment>
<comment type="subcellular location">
    <subcellularLocation>
        <location evidence="5">Nucleus</location>
    </subcellularLocation>
</comment>
<comment type="alternative products">
    <event type="alternative splicing"/>
    <isoform>
        <id>F4IS91-1</id>
        <name>1</name>
        <sequence type="displayed"/>
    </isoform>
    <isoform>
        <id>F4IS91-2</id>
        <name>2</name>
        <sequence type="described" ref="VSP_059721 VSP_059722"/>
    </isoform>
</comment>
<comment type="tissue specificity">
    <text evidence="5">Expressed ubiquitously at high levels, including in guard cells.</text>
</comment>
<comment type="induction">
    <text evidence="5">Slightly induced by salt (NaCl) stress.</text>
</comment>
<comment type="disruption phenotype">
    <text evidence="4 5">Defective embryo arrested at cotyledon stage (PubMed:15266054). Hypersensitivity to salt (NaCl) stress leading to reduced roots and shoots growth and altered germination, and associated with altered sodium (Na) homeostasis and over-accumulation of reactive oxygen species (ROS). Hypersensitivity to hydrogen peroxide H(2)O(2) and methyl viologen (MV) (PubMed:24009530).</text>
</comment>
<comment type="sequence caution" evidence="8">
    <conflict type="erroneous gene model prediction">
        <sequence resource="EMBL-CDS" id="AAC34487"/>
    </conflict>
</comment>
<comment type="online information" name="Seed defective Arabidopsis mutants">
    <link uri="http://seedgenes.org/MutantList"/>
</comment>
<keyword id="KW-0025">Alternative splicing</keyword>
<keyword id="KW-0106">Calcium</keyword>
<keyword id="KW-0175">Coiled coil</keyword>
<keyword id="KW-0539">Nucleus</keyword>
<keyword id="KW-1185">Reference proteome</keyword>
<keyword id="KW-0346">Stress response</keyword>
<keyword id="KW-0809">Transit peptide</keyword>
<name>RSA1_ARATH</name>
<dbReference type="EMBL" id="AC005313">
    <property type="protein sequence ID" value="AAC34487.1"/>
    <property type="status" value="ALT_SEQ"/>
    <property type="molecule type" value="Genomic_DNA"/>
</dbReference>
<dbReference type="EMBL" id="CP002685">
    <property type="protein sequence ID" value="AEC05669.1"/>
    <property type="molecule type" value="Genomic_DNA"/>
</dbReference>
<dbReference type="EMBL" id="AK228824">
    <property type="protein sequence ID" value="BAF00720.1"/>
    <property type="molecule type" value="mRNA"/>
</dbReference>
<dbReference type="EMBL" id="AY062555">
    <property type="protein sequence ID" value="AAL32633.1"/>
    <property type="molecule type" value="mRNA"/>
</dbReference>
<dbReference type="PIR" id="T02711">
    <property type="entry name" value="T02711"/>
</dbReference>
<dbReference type="RefSeq" id="NP_178414.2">
    <molecule id="F4IS91-1"/>
    <property type="nucleotide sequence ID" value="NM_126366.5"/>
</dbReference>
<dbReference type="SMR" id="F4IS91"/>
<dbReference type="FunCoup" id="F4IS91">
    <property type="interactions" value="3591"/>
</dbReference>
<dbReference type="STRING" id="3702.F4IS91"/>
<dbReference type="GlyGen" id="F4IS91">
    <property type="glycosylation" value="3 sites, 1 O-linked glycan (3 sites)"/>
</dbReference>
<dbReference type="iPTMnet" id="F4IS91"/>
<dbReference type="PaxDb" id="3702-AT2G03150.1"/>
<dbReference type="ProteomicsDB" id="226783">
    <molecule id="F4IS91-1"/>
</dbReference>
<dbReference type="EnsemblPlants" id="AT2G03150.1">
    <molecule id="F4IS91-1"/>
    <property type="protein sequence ID" value="AT2G03150.1"/>
    <property type="gene ID" value="AT2G03150"/>
</dbReference>
<dbReference type="GeneID" id="814844"/>
<dbReference type="Gramene" id="AT2G03150.1">
    <molecule id="F4IS91-1"/>
    <property type="protein sequence ID" value="AT2G03150.1"/>
    <property type="gene ID" value="AT2G03150"/>
</dbReference>
<dbReference type="KEGG" id="ath:AT2G03150"/>
<dbReference type="Araport" id="AT2G03150"/>
<dbReference type="TAIR" id="AT2G03150">
    <property type="gene designation" value="RSA1"/>
</dbReference>
<dbReference type="eggNOG" id="KOG4246">
    <property type="taxonomic scope" value="Eukaryota"/>
</dbReference>
<dbReference type="HOGENOM" id="CLU_006390_0_0_1"/>
<dbReference type="InParanoid" id="F4IS91"/>
<dbReference type="OMA" id="GHQIHDR"/>
<dbReference type="PRO" id="PR:F4IS91"/>
<dbReference type="Proteomes" id="UP000006548">
    <property type="component" value="Chromosome 2"/>
</dbReference>
<dbReference type="ExpressionAtlas" id="F4IS91">
    <property type="expression patterns" value="baseline and differential"/>
</dbReference>
<dbReference type="GO" id="GO:0005634">
    <property type="term" value="C:nucleus"/>
    <property type="evidence" value="ECO:0000314"/>
    <property type="project" value="TAIR"/>
</dbReference>
<dbReference type="GO" id="GO:0005509">
    <property type="term" value="F:calcium ion binding"/>
    <property type="evidence" value="ECO:0000314"/>
    <property type="project" value="TAIR"/>
</dbReference>
<dbReference type="GO" id="GO:0006355">
    <property type="term" value="P:regulation of DNA-templated transcription"/>
    <property type="evidence" value="ECO:0000315"/>
    <property type="project" value="TAIR"/>
</dbReference>
<dbReference type="GO" id="GO:0009651">
    <property type="term" value="P:response to salt stress"/>
    <property type="evidence" value="ECO:0000315"/>
    <property type="project" value="UniProtKB"/>
</dbReference>
<dbReference type="GO" id="GO:0055078">
    <property type="term" value="P:sodium ion homeostasis"/>
    <property type="evidence" value="ECO:0000315"/>
    <property type="project" value="TAIR"/>
</dbReference>
<dbReference type="FunFam" id="1.10.238.10:FF:000157">
    <property type="entry name" value="ATP/GTP-binding protein family"/>
    <property type="match status" value="1"/>
</dbReference>
<dbReference type="Gene3D" id="1.10.238.10">
    <property type="entry name" value="EF-hand"/>
    <property type="match status" value="1"/>
</dbReference>
<dbReference type="InterPro" id="IPR045354">
    <property type="entry name" value="BURAN"/>
</dbReference>
<dbReference type="InterPro" id="IPR025224">
    <property type="entry name" value="CCAR1/CCAR2"/>
</dbReference>
<dbReference type="InterPro" id="IPR025954">
    <property type="entry name" value="DBC1/CARP1_inactive_NUDIX_dom"/>
</dbReference>
<dbReference type="InterPro" id="IPR011992">
    <property type="entry name" value="EF-hand-dom_pair"/>
</dbReference>
<dbReference type="InterPro" id="IPR002048">
    <property type="entry name" value="EF_hand_dom"/>
</dbReference>
<dbReference type="InterPro" id="IPR045353">
    <property type="entry name" value="LAIKA"/>
</dbReference>
<dbReference type="PANTHER" id="PTHR14304">
    <property type="entry name" value="CELL DIVISION CYCLE AND APOPTOSIS REGULATOR PROTEIN"/>
    <property type="match status" value="1"/>
</dbReference>
<dbReference type="PANTHER" id="PTHR14304:SF11">
    <property type="entry name" value="SAP DOMAIN-CONTAINING PROTEIN"/>
    <property type="match status" value="1"/>
</dbReference>
<dbReference type="Pfam" id="PF19257">
    <property type="entry name" value="BURAN"/>
    <property type="match status" value="1"/>
</dbReference>
<dbReference type="Pfam" id="PF14443">
    <property type="entry name" value="DBC1"/>
    <property type="match status" value="1"/>
</dbReference>
<dbReference type="Pfam" id="PF19256">
    <property type="entry name" value="LAIKA"/>
    <property type="match status" value="1"/>
</dbReference>
<dbReference type="SMART" id="SM01122">
    <property type="entry name" value="DBC1"/>
    <property type="match status" value="1"/>
</dbReference>
<dbReference type="SUPFAM" id="SSF47473">
    <property type="entry name" value="EF-hand"/>
    <property type="match status" value="1"/>
</dbReference>
<dbReference type="PROSITE" id="PS50222">
    <property type="entry name" value="EF_HAND_2"/>
    <property type="match status" value="1"/>
</dbReference>
<proteinExistence type="evidence at protein level"/>
<organism>
    <name type="scientific">Arabidopsis thaliana</name>
    <name type="common">Mouse-ear cress</name>
    <dbReference type="NCBI Taxonomy" id="3702"/>
    <lineage>
        <taxon>Eukaryota</taxon>
        <taxon>Viridiplantae</taxon>
        <taxon>Streptophyta</taxon>
        <taxon>Embryophyta</taxon>
        <taxon>Tracheophyta</taxon>
        <taxon>Spermatophyta</taxon>
        <taxon>Magnoliopsida</taxon>
        <taxon>eudicotyledons</taxon>
        <taxon>Gunneridae</taxon>
        <taxon>Pentapetalae</taxon>
        <taxon>rosids</taxon>
        <taxon>malvids</taxon>
        <taxon>Brassicales</taxon>
        <taxon>Brassicaceae</taxon>
        <taxon>Camelineae</taxon>
        <taxon>Arabidopsis</taxon>
    </lineage>
</organism>
<gene>
    <name evidence="7" type="primary">RSA1</name>
    <name evidence="6" type="synonym">emb1579</name>
    <name evidence="9" type="ordered locus">At2g03150</name>
    <name evidence="10" type="ORF">T18E12.18</name>
</gene>
<feature type="chain" id="PRO_0000445015" description="Protein SHORT ROOT IN SALT MEDIUM 1" evidence="1">
    <location>
        <begin position="1"/>
        <end position="1340"/>
    </location>
</feature>
<feature type="domain" description="EF-hand" evidence="2">
    <location>
        <begin position="1270"/>
        <end position="1305"/>
    </location>
</feature>
<feature type="region of interest" description="Disordered" evidence="3">
    <location>
        <begin position="1"/>
        <end position="73"/>
    </location>
</feature>
<feature type="region of interest" description="Disordered" evidence="3">
    <location>
        <begin position="161"/>
        <end position="185"/>
    </location>
</feature>
<feature type="region of interest" description="Disordered" evidence="3">
    <location>
        <begin position="357"/>
        <end position="473"/>
    </location>
</feature>
<feature type="region of interest" description="Disordered" evidence="3">
    <location>
        <begin position="723"/>
        <end position="750"/>
    </location>
</feature>
<feature type="region of interest" description="Disordered" evidence="3">
    <location>
        <begin position="784"/>
        <end position="990"/>
    </location>
</feature>
<feature type="region of interest" description="Disordered" evidence="3">
    <location>
        <begin position="1063"/>
        <end position="1269"/>
    </location>
</feature>
<feature type="coiled-coil region" evidence="1">
    <location>
        <begin position="355"/>
        <end position="426"/>
    </location>
</feature>
<feature type="coiled-coil region" evidence="1">
    <location>
        <begin position="1052"/>
        <end position="1086"/>
    </location>
</feature>
<feature type="compositionally biased region" description="Low complexity" evidence="3">
    <location>
        <begin position="7"/>
        <end position="39"/>
    </location>
</feature>
<feature type="compositionally biased region" description="Polar residues" evidence="3">
    <location>
        <begin position="46"/>
        <end position="60"/>
    </location>
</feature>
<feature type="compositionally biased region" description="Basic and acidic residues" evidence="3">
    <location>
        <begin position="173"/>
        <end position="182"/>
    </location>
</feature>
<feature type="compositionally biased region" description="Basic and acidic residues" evidence="3">
    <location>
        <begin position="357"/>
        <end position="470"/>
    </location>
</feature>
<feature type="compositionally biased region" description="Basic and acidic residues" evidence="3">
    <location>
        <begin position="723"/>
        <end position="735"/>
    </location>
</feature>
<feature type="compositionally biased region" description="Polar residues" evidence="3">
    <location>
        <begin position="810"/>
        <end position="824"/>
    </location>
</feature>
<feature type="compositionally biased region" description="Basic residues" evidence="3">
    <location>
        <begin position="828"/>
        <end position="840"/>
    </location>
</feature>
<feature type="compositionally biased region" description="Basic and acidic residues" evidence="3">
    <location>
        <begin position="841"/>
        <end position="872"/>
    </location>
</feature>
<feature type="compositionally biased region" description="Basic and acidic residues" evidence="3">
    <location>
        <begin position="887"/>
        <end position="988"/>
    </location>
</feature>
<feature type="compositionally biased region" description="Basic and acidic residues" evidence="3">
    <location>
        <begin position="1069"/>
        <end position="1097"/>
    </location>
</feature>
<feature type="compositionally biased region" description="Basic and acidic residues" evidence="3">
    <location>
        <begin position="1105"/>
        <end position="1138"/>
    </location>
</feature>
<feature type="compositionally biased region" description="Acidic residues" evidence="3">
    <location>
        <begin position="1153"/>
        <end position="1204"/>
    </location>
</feature>
<feature type="compositionally biased region" description="Basic and acidic residues" evidence="3">
    <location>
        <begin position="1205"/>
        <end position="1214"/>
    </location>
</feature>
<feature type="compositionally biased region" description="Basic and acidic residues" evidence="3">
    <location>
        <begin position="1229"/>
        <end position="1257"/>
    </location>
</feature>
<feature type="splice variant" id="VSP_059721" description="In isoform 2.">
    <original>HSFMAI</original>
    <variation>QRNFGQ</variation>
    <location>
        <begin position="611"/>
        <end position="616"/>
    </location>
</feature>
<feature type="splice variant" id="VSP_059722" description="In isoform 2.">
    <location>
        <begin position="617"/>
        <end position="1340"/>
    </location>
</feature>
<feature type="mutagenesis site" description="In rsa1-1; hypersensitivity to salt (NaCl) stress." evidence="5">
    <original>P</original>
    <variation>L</variation>
    <location>
        <position position="685"/>
    </location>
</feature>
<feature type="sequence conflict" description="In Ref. 4; AAL32633." evidence="8" ref="4">
    <original>V</original>
    <variation>F</variation>
    <location>
        <position position="487"/>
    </location>
</feature>
<reference key="1">
    <citation type="journal article" date="1999" name="Nature">
        <title>Sequence and analysis of chromosome 2 of the plant Arabidopsis thaliana.</title>
        <authorList>
            <person name="Lin X."/>
            <person name="Kaul S."/>
            <person name="Rounsley S.D."/>
            <person name="Shea T.P."/>
            <person name="Benito M.-I."/>
            <person name="Town C.D."/>
            <person name="Fujii C.Y."/>
            <person name="Mason T.M."/>
            <person name="Bowman C.L."/>
            <person name="Barnstead M.E."/>
            <person name="Feldblyum T.V."/>
            <person name="Buell C.R."/>
            <person name="Ketchum K.A."/>
            <person name="Lee J.J."/>
            <person name="Ronning C.M."/>
            <person name="Koo H.L."/>
            <person name="Moffat K.S."/>
            <person name="Cronin L.A."/>
            <person name="Shen M."/>
            <person name="Pai G."/>
            <person name="Van Aken S."/>
            <person name="Umayam L."/>
            <person name="Tallon L.J."/>
            <person name="Gill J.E."/>
            <person name="Adams M.D."/>
            <person name="Carrera A.J."/>
            <person name="Creasy T.H."/>
            <person name="Goodman H.M."/>
            <person name="Somerville C.R."/>
            <person name="Copenhaver G.P."/>
            <person name="Preuss D."/>
            <person name="Nierman W.C."/>
            <person name="White O."/>
            <person name="Eisen J.A."/>
            <person name="Salzberg S.L."/>
            <person name="Fraser C.M."/>
            <person name="Venter J.C."/>
        </authorList>
    </citation>
    <scope>NUCLEOTIDE SEQUENCE [LARGE SCALE GENOMIC DNA]</scope>
    <source>
        <strain>cv. Columbia</strain>
    </source>
</reference>
<reference key="2">
    <citation type="journal article" date="2017" name="Plant J.">
        <title>Araport11: a complete reannotation of the Arabidopsis thaliana reference genome.</title>
        <authorList>
            <person name="Cheng C.Y."/>
            <person name="Krishnakumar V."/>
            <person name="Chan A.P."/>
            <person name="Thibaud-Nissen F."/>
            <person name="Schobel S."/>
            <person name="Town C.D."/>
        </authorList>
    </citation>
    <scope>GENOME REANNOTATION</scope>
    <source>
        <strain>cv. Columbia</strain>
    </source>
</reference>
<reference key="3">
    <citation type="submission" date="2006-07" db="EMBL/GenBank/DDBJ databases">
        <title>Large-scale analysis of RIKEN Arabidopsis full-length (RAFL) cDNAs.</title>
        <authorList>
            <person name="Totoki Y."/>
            <person name="Seki M."/>
            <person name="Ishida J."/>
            <person name="Nakajima M."/>
            <person name="Enju A."/>
            <person name="Kamiya A."/>
            <person name="Narusaka M."/>
            <person name="Shin-i T."/>
            <person name="Nakagawa M."/>
            <person name="Sakamoto N."/>
            <person name="Oishi K."/>
            <person name="Kohara Y."/>
            <person name="Kobayashi M."/>
            <person name="Toyoda A."/>
            <person name="Sakaki Y."/>
            <person name="Sakurai T."/>
            <person name="Iida K."/>
            <person name="Akiyama K."/>
            <person name="Satou M."/>
            <person name="Toyoda T."/>
            <person name="Konagaya A."/>
            <person name="Carninci P."/>
            <person name="Kawai J."/>
            <person name="Hayashizaki Y."/>
            <person name="Shinozaki K."/>
        </authorList>
    </citation>
    <scope>NUCLEOTIDE SEQUENCE [LARGE SCALE MRNA] (ISOFORM 2)</scope>
    <source>
        <strain>cv. Columbia</strain>
    </source>
</reference>
<reference key="4">
    <citation type="journal article" date="2003" name="Science">
        <title>Empirical analysis of transcriptional activity in the Arabidopsis genome.</title>
        <authorList>
            <person name="Yamada K."/>
            <person name="Lim J."/>
            <person name="Dale J.M."/>
            <person name="Chen H."/>
            <person name="Shinn P."/>
            <person name="Palm C.J."/>
            <person name="Southwick A.M."/>
            <person name="Wu H.C."/>
            <person name="Kim C.J."/>
            <person name="Nguyen M."/>
            <person name="Pham P.K."/>
            <person name="Cheuk R.F."/>
            <person name="Karlin-Newmann G."/>
            <person name="Liu S.X."/>
            <person name="Lam B."/>
            <person name="Sakano H."/>
            <person name="Wu T."/>
            <person name="Yu G."/>
            <person name="Miranda M."/>
            <person name="Quach H.L."/>
            <person name="Tripp M."/>
            <person name="Chang C.H."/>
            <person name="Lee J.M."/>
            <person name="Toriumi M.J."/>
            <person name="Chan M.M."/>
            <person name="Tang C.C."/>
            <person name="Onodera C.S."/>
            <person name="Deng J.M."/>
            <person name="Akiyama K."/>
            <person name="Ansari Y."/>
            <person name="Arakawa T."/>
            <person name="Banh J."/>
            <person name="Banno F."/>
            <person name="Bowser L."/>
            <person name="Brooks S.Y."/>
            <person name="Carninci P."/>
            <person name="Chao Q."/>
            <person name="Choy N."/>
            <person name="Enju A."/>
            <person name="Goldsmith A.D."/>
            <person name="Gurjal M."/>
            <person name="Hansen N.F."/>
            <person name="Hayashizaki Y."/>
            <person name="Johnson-Hopson C."/>
            <person name="Hsuan V.W."/>
            <person name="Iida K."/>
            <person name="Karnes M."/>
            <person name="Khan S."/>
            <person name="Koesema E."/>
            <person name="Ishida J."/>
            <person name="Jiang P.X."/>
            <person name="Jones T."/>
            <person name="Kawai J."/>
            <person name="Kamiya A."/>
            <person name="Meyers C."/>
            <person name="Nakajima M."/>
            <person name="Narusaka M."/>
            <person name="Seki M."/>
            <person name="Sakurai T."/>
            <person name="Satou M."/>
            <person name="Tamse R."/>
            <person name="Vaysberg M."/>
            <person name="Wallender E.K."/>
            <person name="Wong C."/>
            <person name="Yamamura Y."/>
            <person name="Yuan S."/>
            <person name="Shinozaki K."/>
            <person name="Davis R.W."/>
            <person name="Theologis A."/>
            <person name="Ecker J.R."/>
        </authorList>
    </citation>
    <scope>NUCLEOTIDE SEQUENCE [LARGE SCALE MRNA] OF 1-828</scope>
    <source>
        <strain>cv. Columbia</strain>
    </source>
</reference>
<reference key="5">
    <citation type="journal article" date="2004" name="Plant Physiol.">
        <title>Identification of genes required for embryo development in Arabidopsis.</title>
        <authorList>
            <person name="Tzafrir I."/>
            <person name="Pena-Muralla R."/>
            <person name="Dickerman A."/>
            <person name="Berg M."/>
            <person name="Rogers R."/>
            <person name="Hutchens S."/>
            <person name="Sweeney T.C."/>
            <person name="McElver J."/>
            <person name="Aux G."/>
            <person name="Patton D."/>
            <person name="Meinke D."/>
        </authorList>
    </citation>
    <scope>DISRUPTION PHENOTYPE [LARGE SCALE ANALYSIS]</scope>
    <source>
        <strain>cv. Columbia</strain>
    </source>
</reference>
<reference key="6">
    <citation type="journal article" date="2008" name="J. Proteome Res.">
        <title>Site-specific phosphorylation profiling of Arabidopsis proteins by mass spectrometry and peptide chip analysis.</title>
        <authorList>
            <person name="de la Fuente van Bentem S."/>
            <person name="Anrather D."/>
            <person name="Dohnal I."/>
            <person name="Roitinger E."/>
            <person name="Csaszar E."/>
            <person name="Joore J."/>
            <person name="Buijnink J."/>
            <person name="Carreri A."/>
            <person name="Forzani C."/>
            <person name="Lorkovic Z.J."/>
            <person name="Barta A."/>
            <person name="Lecourieux D."/>
            <person name="Verhounig A."/>
            <person name="Jonak C."/>
            <person name="Hirt H."/>
        </authorList>
    </citation>
    <scope>IDENTIFICATION BY MASS SPECTROMETRY [LARGE SCALE ANALYSIS]</scope>
</reference>
<reference key="7">
    <citation type="journal article" date="2009" name="Plant Physiol.">
        <title>Large-scale Arabidopsis phosphoproteome profiling reveals novel chloroplast kinase substrates and phosphorylation networks.</title>
        <authorList>
            <person name="Reiland S."/>
            <person name="Messerli G."/>
            <person name="Baerenfaller K."/>
            <person name="Gerrits B."/>
            <person name="Endler A."/>
            <person name="Grossmann J."/>
            <person name="Gruissem W."/>
            <person name="Baginsky S."/>
        </authorList>
    </citation>
    <scope>IDENTIFICATION BY MASS SPECTROMETRY [LARGE SCALE ANALYSIS]</scope>
</reference>
<reference key="8">
    <citation type="journal article" date="2013" name="PLoS Genet.">
        <title>A nuclear calcium-sensing pathway is critical for gene regulation and salt stress tolerance in Arabidopsis.</title>
        <authorList>
            <person name="Guan Q."/>
            <person name="Wu J."/>
            <person name="Yue X."/>
            <person name="Zhang Y."/>
            <person name="Zhu J."/>
        </authorList>
    </citation>
    <scope>FUNCTION</scope>
    <scope>DISRUPTION PHENOTYPE</scope>
    <scope>MUTAGENESIS OF PRO-685</scope>
    <scope>SUBCELLULAR LOCATION</scope>
    <scope>INTERACTION WITH BHLH148/RITF1 AND CALCIUM</scope>
    <scope>TISSUE SPECIFICITY</scope>
    <scope>INDUCTION BY SALT STRESS</scope>
    <source>
        <strain>cv. Columbia</strain>
        <strain>cv. Columbia GL1</strain>
    </source>
</reference>
<protein>
    <recommendedName>
        <fullName evidence="7">Protein SHORT ROOT IN SALT MEDIUM 1</fullName>
        <shortName evidence="7">AtRSA1</shortName>
    </recommendedName>
    <alternativeName>
        <fullName evidence="6">Protein EMBRYO DEFECTIVE 1579</fullName>
    </alternativeName>
</protein>
<evidence type="ECO:0000255" key="1"/>
<evidence type="ECO:0000255" key="2">
    <source>
        <dbReference type="PROSITE-ProRule" id="PRU00448"/>
    </source>
</evidence>
<evidence type="ECO:0000256" key="3">
    <source>
        <dbReference type="SAM" id="MobiDB-lite"/>
    </source>
</evidence>
<evidence type="ECO:0000269" key="4">
    <source>
    </source>
</evidence>
<evidence type="ECO:0000269" key="5">
    <source>
    </source>
</evidence>
<evidence type="ECO:0000303" key="6">
    <source>
    </source>
</evidence>
<evidence type="ECO:0000303" key="7">
    <source>
    </source>
</evidence>
<evidence type="ECO:0000305" key="8"/>
<evidence type="ECO:0000312" key="9">
    <source>
        <dbReference type="Araport" id="AT2G03150"/>
    </source>
</evidence>
<evidence type="ECO:0000312" key="10">
    <source>
        <dbReference type="EMBL" id="AEC05669.1"/>
    </source>
</evidence>